<keyword id="KW-0963">Cytoplasm</keyword>
<keyword id="KW-0349">Heme</keyword>
<keyword id="KW-0408">Iron</keyword>
<keyword id="KW-0479">Metal-binding</keyword>
<keyword id="KW-0944">Nitration</keyword>
<keyword id="KW-0535">Nitrogen fixation</keyword>
<keyword id="KW-0536">Nodulation</keyword>
<keyword id="KW-0539">Nucleus</keyword>
<keyword id="KW-0561">Oxygen transport</keyword>
<keyword id="KW-0597">Phosphoprotein</keyword>
<keyword id="KW-1185">Reference proteome</keyword>
<keyword id="KW-0813">Transport</keyword>
<dbReference type="EMBL" id="X57733">
    <property type="protein sequence ID" value="CAA40900.1"/>
    <property type="molecule type" value="Genomic_DNA"/>
</dbReference>
<dbReference type="EMBL" id="BT137857">
    <property type="protein sequence ID" value="AFK37652.1"/>
    <property type="molecule type" value="mRNA"/>
</dbReference>
<dbReference type="EMBL" id="CM001217">
    <property type="protein sequence ID" value="AES58940.1"/>
    <property type="molecule type" value="Genomic_DNA"/>
</dbReference>
<dbReference type="EMBL" id="PSQE01000001">
    <property type="protein sequence ID" value="RHN76887.1"/>
    <property type="molecule type" value="Genomic_DNA"/>
</dbReference>
<dbReference type="PIR" id="S17439">
    <property type="entry name" value="S17439"/>
</dbReference>
<dbReference type="RefSeq" id="NP_001411843.1">
    <property type="nucleotide sequence ID" value="NM_001424914.1"/>
</dbReference>
<dbReference type="RefSeq" id="XP_003588689.1">
    <property type="nucleotide sequence ID" value="XM_003588641.2"/>
</dbReference>
<dbReference type="SMR" id="P27993"/>
<dbReference type="PaxDb" id="3880-AES58940"/>
<dbReference type="EnsemblPlants" id="rna272">
    <property type="protein sequence ID" value="RHN76887.1"/>
    <property type="gene ID" value="gene272"/>
</dbReference>
<dbReference type="GeneID" id="11433347"/>
<dbReference type="Gramene" id="rna272">
    <property type="protein sequence ID" value="RHN76887.1"/>
    <property type="gene ID" value="gene272"/>
</dbReference>
<dbReference type="KEGG" id="mtr:11433347"/>
<dbReference type="eggNOG" id="KOG3378">
    <property type="taxonomic scope" value="Eukaryota"/>
</dbReference>
<dbReference type="HOGENOM" id="CLU_003827_11_2_1"/>
<dbReference type="OMA" id="VQESHFE"/>
<dbReference type="OrthoDB" id="2012505at2759"/>
<dbReference type="Proteomes" id="UP000002051">
    <property type="component" value="Chromosome 1"/>
</dbReference>
<dbReference type="Proteomes" id="UP000265566">
    <property type="component" value="Chromosome 1"/>
</dbReference>
<dbReference type="ExpressionAtlas" id="P27993">
    <property type="expression patterns" value="differential"/>
</dbReference>
<dbReference type="GO" id="GO:0005829">
    <property type="term" value="C:cytosol"/>
    <property type="evidence" value="ECO:0007669"/>
    <property type="project" value="UniProtKB-SubCell"/>
</dbReference>
<dbReference type="GO" id="GO:0005634">
    <property type="term" value="C:nucleus"/>
    <property type="evidence" value="ECO:0007669"/>
    <property type="project" value="UniProtKB-SubCell"/>
</dbReference>
<dbReference type="GO" id="GO:0020037">
    <property type="term" value="F:heme binding"/>
    <property type="evidence" value="ECO:0007669"/>
    <property type="project" value="InterPro"/>
</dbReference>
<dbReference type="GO" id="GO:0046872">
    <property type="term" value="F:metal ion binding"/>
    <property type="evidence" value="ECO:0007669"/>
    <property type="project" value="UniProtKB-KW"/>
</dbReference>
<dbReference type="GO" id="GO:0019825">
    <property type="term" value="F:oxygen binding"/>
    <property type="evidence" value="ECO:0007669"/>
    <property type="project" value="InterPro"/>
</dbReference>
<dbReference type="GO" id="GO:0005344">
    <property type="term" value="F:oxygen carrier activity"/>
    <property type="evidence" value="ECO:0007669"/>
    <property type="project" value="UniProtKB-KW"/>
</dbReference>
<dbReference type="GO" id="GO:0009877">
    <property type="term" value="P:nodulation"/>
    <property type="evidence" value="ECO:0007669"/>
    <property type="project" value="UniProtKB-KW"/>
</dbReference>
<dbReference type="GO" id="GO:0046686">
    <property type="term" value="P:response to cadmium ion"/>
    <property type="evidence" value="ECO:0000270"/>
    <property type="project" value="UniProtKB"/>
</dbReference>
<dbReference type="GO" id="GO:0071731">
    <property type="term" value="P:response to nitric oxide"/>
    <property type="evidence" value="ECO:0000270"/>
    <property type="project" value="UniProtKB"/>
</dbReference>
<dbReference type="CDD" id="cd08923">
    <property type="entry name" value="class1-2_nsHbs_Lbs"/>
    <property type="match status" value="1"/>
</dbReference>
<dbReference type="Gene3D" id="1.10.490.10">
    <property type="entry name" value="Globins"/>
    <property type="match status" value="1"/>
</dbReference>
<dbReference type="InterPro" id="IPR000971">
    <property type="entry name" value="Globin"/>
</dbReference>
<dbReference type="InterPro" id="IPR009050">
    <property type="entry name" value="Globin-like_sf"/>
</dbReference>
<dbReference type="InterPro" id="IPR012292">
    <property type="entry name" value="Globin/Proto"/>
</dbReference>
<dbReference type="InterPro" id="IPR001032">
    <property type="entry name" value="Leghaemoglobin-like"/>
</dbReference>
<dbReference type="InterPro" id="IPR019824">
    <property type="entry name" value="Leghaemoglobin_Fe_BS"/>
</dbReference>
<dbReference type="PANTHER" id="PTHR22924">
    <property type="entry name" value="LEGHEMOGLOBIN-RELATED"/>
    <property type="match status" value="1"/>
</dbReference>
<dbReference type="PANTHER" id="PTHR22924:SF92">
    <property type="entry name" value="NON-SYMBIOTIC HEMOGLOBIN 2"/>
    <property type="match status" value="1"/>
</dbReference>
<dbReference type="Pfam" id="PF00042">
    <property type="entry name" value="Globin"/>
    <property type="match status" value="1"/>
</dbReference>
<dbReference type="PRINTS" id="PR00188">
    <property type="entry name" value="PLANTGLOBIN"/>
</dbReference>
<dbReference type="SUPFAM" id="SSF46458">
    <property type="entry name" value="Globin-like"/>
    <property type="match status" value="1"/>
</dbReference>
<dbReference type="PROSITE" id="PS01033">
    <property type="entry name" value="GLOBIN"/>
    <property type="match status" value="1"/>
</dbReference>
<dbReference type="PROSITE" id="PS00208">
    <property type="entry name" value="PLANT_GLOBIN"/>
    <property type="match status" value="1"/>
</dbReference>
<organism>
    <name type="scientific">Medicago truncatula</name>
    <name type="common">Barrel medic</name>
    <name type="synonym">Medicago tribuloides</name>
    <dbReference type="NCBI Taxonomy" id="3880"/>
    <lineage>
        <taxon>Eukaryota</taxon>
        <taxon>Viridiplantae</taxon>
        <taxon>Streptophyta</taxon>
        <taxon>Embryophyta</taxon>
        <taxon>Tracheophyta</taxon>
        <taxon>Spermatophyta</taxon>
        <taxon>Magnoliopsida</taxon>
        <taxon>eudicotyledons</taxon>
        <taxon>Gunneridae</taxon>
        <taxon>Pentapetalae</taxon>
        <taxon>rosids</taxon>
        <taxon>fabids</taxon>
        <taxon>Fabales</taxon>
        <taxon>Fabaceae</taxon>
        <taxon>Papilionoideae</taxon>
        <taxon>50 kb inversion clade</taxon>
        <taxon>NPAAA clade</taxon>
        <taxon>Hologalegina</taxon>
        <taxon>IRL clade</taxon>
        <taxon>Trifolieae</taxon>
        <taxon>Medicago</taxon>
    </lineage>
</organism>
<evidence type="ECO:0000250" key="1">
    <source>
        <dbReference type="UniProtKB" id="P02233"/>
    </source>
</evidence>
<evidence type="ECO:0000250" key="2">
    <source>
        <dbReference type="UniProtKB" id="P02234"/>
    </source>
</evidence>
<evidence type="ECO:0000250" key="3">
    <source>
        <dbReference type="UniProtKB" id="P02237"/>
    </source>
</evidence>
<evidence type="ECO:0000250" key="4">
    <source>
        <dbReference type="UniProtKB" id="P02240"/>
    </source>
</evidence>
<evidence type="ECO:0000250" key="5">
    <source>
        <dbReference type="UniProtKB" id="Q3C1F7"/>
    </source>
</evidence>
<evidence type="ECO:0000250" key="6">
    <source>
        <dbReference type="UniProtKB" id="Q43296"/>
    </source>
</evidence>
<evidence type="ECO:0000255" key="7">
    <source>
        <dbReference type="PROSITE-ProRule" id="PRU00238"/>
    </source>
</evidence>
<evidence type="ECO:0000269" key="8">
    <source>
    </source>
</evidence>
<evidence type="ECO:0000269" key="9">
    <source>
    </source>
</evidence>
<evidence type="ECO:0000269" key="10">
    <source>
    </source>
</evidence>
<evidence type="ECO:0000303" key="11">
    <source>
    </source>
</evidence>
<evidence type="ECO:0000303" key="12">
    <source>
    </source>
</evidence>
<evidence type="ECO:0000303" key="13">
    <source>
    </source>
</evidence>
<evidence type="ECO:0000305" key="14"/>
<evidence type="ECO:0000312" key="15">
    <source>
        <dbReference type="EMBL" id="AES58940.1"/>
    </source>
</evidence>
<evidence type="ECO:0000312" key="16">
    <source>
        <dbReference type="EMBL" id="RHN76887.1"/>
    </source>
</evidence>
<feature type="initiator methionine" description="Removed" evidence="1">
    <location>
        <position position="1"/>
    </location>
</feature>
<feature type="chain" id="PRO_0000192990" description="Leghemoglobin 1">
    <location>
        <begin position="2"/>
        <end position="146"/>
    </location>
</feature>
<feature type="domain" description="Globin" evidence="7">
    <location>
        <begin position="2"/>
        <end position="146"/>
    </location>
</feature>
<feature type="binding site" evidence="4">
    <location>
        <position position="44"/>
    </location>
    <ligand>
        <name>heme b</name>
        <dbReference type="ChEBI" id="CHEBI:60344"/>
    </ligand>
</feature>
<feature type="binding site" evidence="4">
    <location>
        <position position="61"/>
    </location>
    <ligand>
        <name>O2</name>
        <dbReference type="ChEBI" id="CHEBI:15379"/>
    </ligand>
</feature>
<feature type="binding site" evidence="4">
    <location>
        <position position="64"/>
    </location>
    <ligand>
        <name>heme b</name>
        <dbReference type="ChEBI" id="CHEBI:60344"/>
    </ligand>
</feature>
<feature type="binding site" description="proximal binding residue" evidence="7">
    <location>
        <position position="93"/>
    </location>
    <ligand>
        <name>heme b</name>
        <dbReference type="ChEBI" id="CHEBI:60344"/>
    </ligand>
    <ligandPart>
        <name>Fe</name>
        <dbReference type="ChEBI" id="CHEBI:18248"/>
    </ligandPart>
</feature>
<feature type="binding site" evidence="4">
    <location>
        <position position="96"/>
    </location>
    <ligand>
        <name>heme b</name>
        <dbReference type="ChEBI" id="CHEBI:60344"/>
    </ligand>
</feature>
<feature type="modified residue" description="Nitrated tyrosine" evidence="2">
    <location>
        <position position="29"/>
    </location>
</feature>
<feature type="modified residue" description="Phosphoserine" evidence="5">
    <location>
        <position position="44"/>
    </location>
</feature>
<feature type="modified residue" description="Nitrated tyrosine" evidence="2">
    <location>
        <position position="134"/>
    </location>
</feature>
<comment type="function">
    <text evidence="3 6">Leghemoglobin that reversibly binds oxygen O(2) through a pentacoordinated heme iron (By similarity). In root nodules, facilitates the diffusion of oxygen to the bacteroids while preventing the bacterial nitrogenase from being inactivated by buffering dioxygen, nitric oxide and carbon monoxide, and promoting the formation of reactive oxygen species (ROS, e.g. H(2)O(2)) (By similarity). This role is essential for symbiotic nitrogen fixation (SNF) (By similarity).</text>
</comment>
<comment type="subunit">
    <text evidence="4">Monomer.</text>
</comment>
<comment type="subcellular location">
    <subcellularLocation>
        <location evidence="4">Cytoplasm</location>
        <location evidence="4">Cytosol</location>
    </subcellularLocation>
    <subcellularLocation>
        <location evidence="4">Nucleus</location>
    </subcellularLocation>
</comment>
<comment type="tissue specificity">
    <text evidence="8">Root nodules.</text>
</comment>
<comment type="induction">
    <text evidence="9 10">Locally down-regulated by cadmium (Cd), thus leading to nodule inactivation and impaired biological nitrogen fixation (BNF) (PubMed:24151304). Down-regulated by nitric oxide (NO), particularly during nodulation mediated by S.meliloti inoculation (PubMed:32003030).</text>
</comment>
<comment type="PTM">
    <text evidence="2">Nitrated in effective nodules and particularly in hypoxic conditions; this mechanism may play a protective role in the symbiosis by buffering toxic peroxynitrite NO(2)(-). Nitration level decrease during nodule senescence.</text>
</comment>
<comment type="PTM">
    <text evidence="5">Phosphorylation at Ser-44 disrupts the molecular environment of its porphyrin ring oxygen binding pocket, thus leading to a reduced oxygen consumption and to the delivery of oxygen O(2) to symbiosomes.</text>
</comment>
<comment type="similarity">
    <text evidence="14">Belongs to the plant globin family.</text>
</comment>
<name>LGB1_MEDTR</name>
<protein>
    <recommendedName>
        <fullName evidence="13">Leghemoglobin 1</fullName>
        <shortName evidence="13">MtLb1</shortName>
    </recommendedName>
    <alternativeName>
        <fullName evidence="11">Leghemoglobin 2</fullName>
        <shortName evidence="11">MtLb2</shortName>
    </alternativeName>
    <alternativeName>
        <fullName evidence="12">Leghemoglobin 4</fullName>
        <shortName evidence="12">MtLb4</shortName>
    </alternativeName>
</protein>
<proteinExistence type="evidence at transcript level"/>
<reference key="1">
    <citation type="journal article" date="1991" name="Plant Mol. Biol.">
        <title>Synchronous expression of leghaemoglobin genes in Medicago truncatula during nitrogen-fixing root nodule development and response to exogenously supplied nitrate.</title>
        <authorList>
            <person name="Gallusci P."/>
            <person name="Dedieu A."/>
            <person name="Journet E.P."/>
            <person name="Huguet T."/>
            <person name="Barker D.G."/>
        </authorList>
    </citation>
    <scope>NUCLEOTIDE SEQUENCE [GENOMIC DNA]</scope>
    <scope>TISSUE SPECIFICITY</scope>
    <source>
        <strain>cv. Jemalong</strain>
        <tissue>Root nodule</tissue>
    </source>
</reference>
<reference key="2">
    <citation type="submission" date="2012-05" db="EMBL/GenBank/DDBJ databases">
        <authorList>
            <person name="Krishnakumar V."/>
            <person name="Cheung F."/>
            <person name="Xiao Y."/>
            <person name="Chan A."/>
            <person name="Moskal W.A."/>
            <person name="Town C.D."/>
        </authorList>
    </citation>
    <scope>NUCLEOTIDE SEQUENCE [MRNA]</scope>
</reference>
<reference key="3">
    <citation type="journal article" date="2011" name="Nature">
        <title>The Medicago genome provides insight into the evolution of rhizobial symbioses.</title>
        <authorList>
            <person name="Young N.D."/>
            <person name="Debelle F."/>
            <person name="Oldroyd G.E.D."/>
            <person name="Geurts R."/>
            <person name="Cannon S.B."/>
            <person name="Udvardi M.K."/>
            <person name="Benedito V.A."/>
            <person name="Mayer K.F.X."/>
            <person name="Gouzy J."/>
            <person name="Schoof H."/>
            <person name="Van de Peer Y."/>
            <person name="Proost S."/>
            <person name="Cook D.R."/>
            <person name="Meyers B.C."/>
            <person name="Spannagl M."/>
            <person name="Cheung F."/>
            <person name="De Mita S."/>
            <person name="Krishnakumar V."/>
            <person name="Gundlach H."/>
            <person name="Zhou S."/>
            <person name="Mudge J."/>
            <person name="Bharti A.K."/>
            <person name="Murray J.D."/>
            <person name="Naoumkina M.A."/>
            <person name="Rosen B."/>
            <person name="Silverstein K.A.T."/>
            <person name="Tang H."/>
            <person name="Rombauts S."/>
            <person name="Zhao P.X."/>
            <person name="Zhou P."/>
            <person name="Barbe V."/>
            <person name="Bardou P."/>
            <person name="Bechner M."/>
            <person name="Bellec A."/>
            <person name="Berger A."/>
            <person name="Berges H."/>
            <person name="Bidwell S."/>
            <person name="Bisseling T."/>
            <person name="Choisne N."/>
            <person name="Couloux A."/>
            <person name="Denny R."/>
            <person name="Deshpande S."/>
            <person name="Dai X."/>
            <person name="Doyle J.J."/>
            <person name="Dudez A.-M."/>
            <person name="Farmer A.D."/>
            <person name="Fouteau S."/>
            <person name="Franken C."/>
            <person name="Gibelin C."/>
            <person name="Gish J."/>
            <person name="Goldstein S."/>
            <person name="Gonzalez A.J."/>
            <person name="Green P.J."/>
            <person name="Hallab A."/>
            <person name="Hartog M."/>
            <person name="Hua A."/>
            <person name="Humphray S.J."/>
            <person name="Jeong D.-H."/>
            <person name="Jing Y."/>
            <person name="Jocker A."/>
            <person name="Kenton S.M."/>
            <person name="Kim D.-J."/>
            <person name="Klee K."/>
            <person name="Lai H."/>
            <person name="Lang C."/>
            <person name="Lin S."/>
            <person name="Macmil S.L."/>
            <person name="Magdelenat G."/>
            <person name="Matthews L."/>
            <person name="McCorrison J."/>
            <person name="Monaghan E.L."/>
            <person name="Mun J.-H."/>
            <person name="Najar F.Z."/>
            <person name="Nicholson C."/>
            <person name="Noirot C."/>
            <person name="O'Bleness M."/>
            <person name="Paule C.R."/>
            <person name="Poulain J."/>
            <person name="Prion F."/>
            <person name="Qin B."/>
            <person name="Qu C."/>
            <person name="Retzel E.F."/>
            <person name="Riddle C."/>
            <person name="Sallet E."/>
            <person name="Samain S."/>
            <person name="Samson N."/>
            <person name="Sanders I."/>
            <person name="Saurat O."/>
            <person name="Scarpelli C."/>
            <person name="Schiex T."/>
            <person name="Segurens B."/>
            <person name="Severin A.J."/>
            <person name="Sherrier D.J."/>
            <person name="Shi R."/>
            <person name="Sims S."/>
            <person name="Singer S.R."/>
            <person name="Sinharoy S."/>
            <person name="Sterck L."/>
            <person name="Viollet A."/>
            <person name="Wang B.-B."/>
            <person name="Wang K."/>
            <person name="Wang M."/>
            <person name="Wang X."/>
            <person name="Warfsmann J."/>
            <person name="Weissenbach J."/>
            <person name="White D.D."/>
            <person name="White J.D."/>
            <person name="Wiley G.B."/>
            <person name="Wincker P."/>
            <person name="Xing Y."/>
            <person name="Yang L."/>
            <person name="Yao Z."/>
            <person name="Ying F."/>
            <person name="Zhai J."/>
            <person name="Zhou L."/>
            <person name="Zuber A."/>
            <person name="Denarie J."/>
            <person name="Dixon R.A."/>
            <person name="May G.D."/>
            <person name="Schwartz D.C."/>
            <person name="Rogers J."/>
            <person name="Quetier F."/>
            <person name="Town C.D."/>
            <person name="Roe B.A."/>
        </authorList>
    </citation>
    <scope>NUCLEOTIDE SEQUENCE [LARGE SCALE GENOMIC DNA]</scope>
    <source>
        <strain>cv. Jemalong A17</strain>
    </source>
</reference>
<reference key="4">
    <citation type="journal article" date="2014" name="BMC Genomics">
        <title>An improved genome release (version Mt4.0) for the model legume Medicago truncatula.</title>
        <authorList>
            <person name="Tang H."/>
            <person name="Krishnakumar V."/>
            <person name="Bidwell S."/>
            <person name="Rosen B."/>
            <person name="Chan A."/>
            <person name="Zhou S."/>
            <person name="Gentzbittel L."/>
            <person name="Childs K.L."/>
            <person name="Yandell M."/>
            <person name="Gundlach H."/>
            <person name="Mayer K.F."/>
            <person name="Schwartz D.C."/>
            <person name="Town C.D."/>
        </authorList>
    </citation>
    <scope>GENOME REANNOTATION</scope>
    <source>
        <strain>cv. Jemalong A17</strain>
    </source>
</reference>
<reference key="5">
    <citation type="journal article" date="2018" name="Nat. Plants">
        <title>Whole-genome landscape of Medicago truncatula symbiotic genes.</title>
        <authorList>
            <person name="Pecrix Y."/>
            <person name="Staton S.E."/>
            <person name="Sallet E."/>
            <person name="Lelandais-Briere C."/>
            <person name="Moreau S."/>
            <person name="Carrere S."/>
            <person name="Blein T."/>
            <person name="Jardinaud M.F."/>
            <person name="Latrasse D."/>
            <person name="Zouine M."/>
            <person name="Zahm M."/>
            <person name="Kreplak J."/>
            <person name="Mayjonade B."/>
            <person name="Satge C."/>
            <person name="Perez M."/>
            <person name="Cauet S."/>
            <person name="Marande W."/>
            <person name="Chantry-Darmon C."/>
            <person name="Lopez-Roques C."/>
            <person name="Bouchez O."/>
            <person name="Berard A."/>
            <person name="Debelle F."/>
            <person name="Munos S."/>
            <person name="Bendahmane A."/>
            <person name="Berges H."/>
            <person name="Niebel A."/>
            <person name="Buitink J."/>
            <person name="Frugier F."/>
            <person name="Benhamed M."/>
            <person name="Crespi M."/>
            <person name="Gouzy J."/>
            <person name="Gamas P."/>
        </authorList>
    </citation>
    <scope>NUCLEOTIDE SEQUENCE [LARGE SCALE GENOMIC DNA]</scope>
    <source>
        <strain>cv. Jemalong A17</strain>
    </source>
</reference>
<reference key="6">
    <citation type="journal article" date="2013" name="J. Exp. Bot.">
        <title>Inhibition of nitrogen fixation in symbiotic Medicago truncatula upon Cd exposure is a local process involving leghaemoglobin.</title>
        <authorList>
            <person name="Marino D."/>
            <person name="Damiani I."/>
            <person name="Gucciardo S."/>
            <person name="Mijangos I."/>
            <person name="Pauly N."/>
            <person name="Puppo A."/>
        </authorList>
    </citation>
    <scope>REPRESSION BY CADMIUM</scope>
    <source>
        <strain>cv. Jemalong J6</strain>
    </source>
</reference>
<reference key="7">
    <citation type="journal article" date="2020" name="New Phytol.">
        <title>Medicago truncatula Phytoglobin 1.1 controls symbiotic nodulation and nitrogen fixation via the regulation of nitric oxide concentration.</title>
        <authorList>
            <person name="Berger A."/>
            <person name="Guinand S."/>
            <person name="Boscari A."/>
            <person name="Puppo A."/>
            <person name="Brouquisse R."/>
        </authorList>
    </citation>
    <scope>REPRESSION BY NITRIC OXIDE</scope>
    <scope>GENE FAMILY</scope>
    <scope>NOMENCLATURE</scope>
    <source>
        <strain>cv. Jemalong A17</strain>
    </source>
</reference>
<reference key="8">
    <citation type="journal article" date="2020" name="New Phytol.">
        <title>Hemoglobins in the legume-Rhizobium symbiosis.</title>
        <authorList>
            <person name="Larrainzar E."/>
            <person name="Villar I."/>
            <person name="Rubio M.C."/>
            <person name="Perez-Rontome C."/>
            <person name="Huertas R."/>
            <person name="Sato S."/>
            <person name="Mun J.-H."/>
            <person name="Becana M."/>
        </authorList>
    </citation>
    <scope>REVIEW ON PHYTOGLOBINS</scope>
    <scope>GENE FAMILY</scope>
    <scope>NOMENCLATURE</scope>
</reference>
<gene>
    <name evidence="13" type="primary">LB1</name>
    <name evidence="11" type="synonym">LB2</name>
    <name evidence="12" type="synonym">LB4</name>
    <name evidence="15" type="ordered locus">MTR_1g011540</name>
    <name evidence="12" type="ordered locus">Medtr1g011540</name>
    <name evidence="16" type="ORF">MtrunA17_Chr1g0148751</name>
</gene>
<accession>P27993</accession>
<accession>G7I6B5</accession>
<sequence>MGFTEKQEALVNSSWELFKQNPGNSVLFYTIILEKAPAAKGMFSFLKDTAGVQDSPKLQSHAEKVFGMVRDSAVQLRATGGVVLGDATLGAIHIQKGVVDPHFVVVKEALLKTIKEVSGDKWSEELSTAWEVAYDALAAAIKKAMG</sequence>